<name>GLPE_ECO24</name>
<proteinExistence type="inferred from homology"/>
<evidence type="ECO:0000255" key="1">
    <source>
        <dbReference type="HAMAP-Rule" id="MF_01009"/>
    </source>
</evidence>
<feature type="chain" id="PRO_1000062956" description="Thiosulfate sulfurtransferase GlpE">
    <location>
        <begin position="1"/>
        <end position="108"/>
    </location>
</feature>
<feature type="domain" description="Rhodanese" evidence="1">
    <location>
        <begin position="17"/>
        <end position="105"/>
    </location>
</feature>
<feature type="active site" description="Cysteine persulfide intermediate" evidence="1">
    <location>
        <position position="65"/>
    </location>
</feature>
<keyword id="KW-0963">Cytoplasm</keyword>
<keyword id="KW-1185">Reference proteome</keyword>
<keyword id="KW-0808">Transferase</keyword>
<protein>
    <recommendedName>
        <fullName evidence="1">Thiosulfate sulfurtransferase GlpE</fullName>
        <ecNumber evidence="1">2.8.1.1</ecNumber>
    </recommendedName>
</protein>
<gene>
    <name evidence="1" type="primary">glpE</name>
    <name type="ordered locus">EcE24377A_3901</name>
</gene>
<accession>A7ZSV5</accession>
<dbReference type="EC" id="2.8.1.1" evidence="1"/>
<dbReference type="EMBL" id="CP000800">
    <property type="protein sequence ID" value="ABV18402.1"/>
    <property type="molecule type" value="Genomic_DNA"/>
</dbReference>
<dbReference type="RefSeq" id="WP_000371928.1">
    <property type="nucleotide sequence ID" value="NC_009801.1"/>
</dbReference>
<dbReference type="BMRB" id="A7ZSV5"/>
<dbReference type="SMR" id="A7ZSV5"/>
<dbReference type="GeneID" id="93778571"/>
<dbReference type="KEGG" id="ecw:EcE24377A_3901"/>
<dbReference type="HOGENOM" id="CLU_089574_14_0_6"/>
<dbReference type="Proteomes" id="UP000001122">
    <property type="component" value="Chromosome"/>
</dbReference>
<dbReference type="GO" id="GO:0005737">
    <property type="term" value="C:cytoplasm"/>
    <property type="evidence" value="ECO:0007669"/>
    <property type="project" value="UniProtKB-SubCell"/>
</dbReference>
<dbReference type="GO" id="GO:0004792">
    <property type="term" value="F:thiosulfate-cyanide sulfurtransferase activity"/>
    <property type="evidence" value="ECO:0007669"/>
    <property type="project" value="UniProtKB-UniRule"/>
</dbReference>
<dbReference type="GO" id="GO:0006071">
    <property type="term" value="P:glycerol metabolic process"/>
    <property type="evidence" value="ECO:0007669"/>
    <property type="project" value="UniProtKB-UniRule"/>
</dbReference>
<dbReference type="CDD" id="cd01444">
    <property type="entry name" value="GlpE_ST"/>
    <property type="match status" value="1"/>
</dbReference>
<dbReference type="FunFam" id="3.40.250.10:FF:000007">
    <property type="entry name" value="Thiosulfate sulfurtransferase GlpE"/>
    <property type="match status" value="1"/>
</dbReference>
<dbReference type="Gene3D" id="3.40.250.10">
    <property type="entry name" value="Rhodanese-like domain"/>
    <property type="match status" value="1"/>
</dbReference>
<dbReference type="HAMAP" id="MF_01009">
    <property type="entry name" value="Thiosulf_sulfurtr"/>
    <property type="match status" value="1"/>
</dbReference>
<dbReference type="InterPro" id="IPR050229">
    <property type="entry name" value="GlpE_sulfurtransferase"/>
</dbReference>
<dbReference type="InterPro" id="IPR001763">
    <property type="entry name" value="Rhodanese-like_dom"/>
</dbReference>
<dbReference type="InterPro" id="IPR036873">
    <property type="entry name" value="Rhodanese-like_dom_sf"/>
</dbReference>
<dbReference type="InterPro" id="IPR023695">
    <property type="entry name" value="Thiosulf_sulfurTrfase"/>
</dbReference>
<dbReference type="NCBIfam" id="NF001195">
    <property type="entry name" value="PRK00162.1"/>
    <property type="match status" value="1"/>
</dbReference>
<dbReference type="PANTHER" id="PTHR43031">
    <property type="entry name" value="FAD-DEPENDENT OXIDOREDUCTASE"/>
    <property type="match status" value="1"/>
</dbReference>
<dbReference type="PANTHER" id="PTHR43031:SF6">
    <property type="entry name" value="THIOSULFATE SULFURTRANSFERASE GLPE"/>
    <property type="match status" value="1"/>
</dbReference>
<dbReference type="Pfam" id="PF00581">
    <property type="entry name" value="Rhodanese"/>
    <property type="match status" value="1"/>
</dbReference>
<dbReference type="SMART" id="SM00450">
    <property type="entry name" value="RHOD"/>
    <property type="match status" value="1"/>
</dbReference>
<dbReference type="SUPFAM" id="SSF52821">
    <property type="entry name" value="Rhodanese/Cell cycle control phosphatase"/>
    <property type="match status" value="1"/>
</dbReference>
<dbReference type="PROSITE" id="PS50206">
    <property type="entry name" value="RHODANESE_3"/>
    <property type="match status" value="1"/>
</dbReference>
<reference key="1">
    <citation type="journal article" date="2008" name="J. Bacteriol.">
        <title>The pangenome structure of Escherichia coli: comparative genomic analysis of E. coli commensal and pathogenic isolates.</title>
        <authorList>
            <person name="Rasko D.A."/>
            <person name="Rosovitz M.J."/>
            <person name="Myers G.S.A."/>
            <person name="Mongodin E.F."/>
            <person name="Fricke W.F."/>
            <person name="Gajer P."/>
            <person name="Crabtree J."/>
            <person name="Sebaihia M."/>
            <person name="Thomson N.R."/>
            <person name="Chaudhuri R."/>
            <person name="Henderson I.R."/>
            <person name="Sperandio V."/>
            <person name="Ravel J."/>
        </authorList>
    </citation>
    <scope>NUCLEOTIDE SEQUENCE [LARGE SCALE GENOMIC DNA]</scope>
    <source>
        <strain>E24377A / ETEC</strain>
    </source>
</reference>
<sequence>MDQFECINVADAHQKLQEKEAVLVDIRDPQSFAMGHAVQAFHLTNDTLGAFMRDNDFDTPVMVMCYHGNSSKGAAQYLLQQGYDVVYSIDGGFEAWQRQFPAEVAYGA</sequence>
<comment type="function">
    <text evidence="1">Transferase that catalyzes the transfer of sulfur from thiosulfate to thiophilic acceptors such as cyanide or dithiols. May function in a CysM-independent thiosulfate assimilation pathway by catalyzing the conversion of thiosulfate to sulfite, which can then be used for L-cysteine biosynthesis.</text>
</comment>
<comment type="catalytic activity">
    <reaction evidence="1">
        <text>thiosulfate + hydrogen cyanide = thiocyanate + sulfite + 2 H(+)</text>
        <dbReference type="Rhea" id="RHEA:16881"/>
        <dbReference type="ChEBI" id="CHEBI:15378"/>
        <dbReference type="ChEBI" id="CHEBI:17359"/>
        <dbReference type="ChEBI" id="CHEBI:18022"/>
        <dbReference type="ChEBI" id="CHEBI:18407"/>
        <dbReference type="ChEBI" id="CHEBI:33542"/>
        <dbReference type="EC" id="2.8.1.1"/>
    </reaction>
</comment>
<comment type="catalytic activity">
    <reaction evidence="1">
        <text>thiosulfate + [thioredoxin]-dithiol = [thioredoxin]-disulfide + hydrogen sulfide + sulfite + 2 H(+)</text>
        <dbReference type="Rhea" id="RHEA:83859"/>
        <dbReference type="Rhea" id="RHEA-COMP:10698"/>
        <dbReference type="Rhea" id="RHEA-COMP:10700"/>
        <dbReference type="ChEBI" id="CHEBI:15378"/>
        <dbReference type="ChEBI" id="CHEBI:17359"/>
        <dbReference type="ChEBI" id="CHEBI:29919"/>
        <dbReference type="ChEBI" id="CHEBI:29950"/>
        <dbReference type="ChEBI" id="CHEBI:33542"/>
        <dbReference type="ChEBI" id="CHEBI:50058"/>
    </reaction>
</comment>
<comment type="subcellular location">
    <subcellularLocation>
        <location evidence="1">Cytoplasm</location>
    </subcellularLocation>
</comment>
<comment type="similarity">
    <text evidence="1">Belongs to the GlpE family.</text>
</comment>
<organism>
    <name type="scientific">Escherichia coli O139:H28 (strain E24377A / ETEC)</name>
    <dbReference type="NCBI Taxonomy" id="331111"/>
    <lineage>
        <taxon>Bacteria</taxon>
        <taxon>Pseudomonadati</taxon>
        <taxon>Pseudomonadota</taxon>
        <taxon>Gammaproteobacteria</taxon>
        <taxon>Enterobacterales</taxon>
        <taxon>Enterobacteriaceae</taxon>
        <taxon>Escherichia</taxon>
    </lineage>
</organism>